<accession>B3W7F8</accession>
<name>RL9_LACCB</name>
<feature type="chain" id="PRO_1000126929" description="Large ribosomal subunit protein bL9">
    <location>
        <begin position="1"/>
        <end position="151"/>
    </location>
</feature>
<protein>
    <recommendedName>
        <fullName evidence="1">Large ribosomal subunit protein bL9</fullName>
    </recommendedName>
    <alternativeName>
        <fullName evidence="2">50S ribosomal protein L9</fullName>
    </alternativeName>
</protein>
<dbReference type="EMBL" id="FM177140">
    <property type="protein sequence ID" value="CAQ65242.1"/>
    <property type="molecule type" value="Genomic_DNA"/>
</dbReference>
<dbReference type="SMR" id="B3W7F8"/>
<dbReference type="KEGG" id="lcb:LCABL_01100"/>
<dbReference type="HOGENOM" id="CLU_078938_3_2_9"/>
<dbReference type="GO" id="GO:1990904">
    <property type="term" value="C:ribonucleoprotein complex"/>
    <property type="evidence" value="ECO:0007669"/>
    <property type="project" value="UniProtKB-KW"/>
</dbReference>
<dbReference type="GO" id="GO:0005840">
    <property type="term" value="C:ribosome"/>
    <property type="evidence" value="ECO:0007669"/>
    <property type="project" value="UniProtKB-KW"/>
</dbReference>
<dbReference type="GO" id="GO:0019843">
    <property type="term" value="F:rRNA binding"/>
    <property type="evidence" value="ECO:0007669"/>
    <property type="project" value="UniProtKB-UniRule"/>
</dbReference>
<dbReference type="GO" id="GO:0003735">
    <property type="term" value="F:structural constituent of ribosome"/>
    <property type="evidence" value="ECO:0007669"/>
    <property type="project" value="InterPro"/>
</dbReference>
<dbReference type="GO" id="GO:0006412">
    <property type="term" value="P:translation"/>
    <property type="evidence" value="ECO:0007669"/>
    <property type="project" value="UniProtKB-UniRule"/>
</dbReference>
<dbReference type="FunFam" id="3.40.5.10:FF:000002">
    <property type="entry name" value="50S ribosomal protein L9"/>
    <property type="match status" value="1"/>
</dbReference>
<dbReference type="Gene3D" id="3.10.430.100">
    <property type="entry name" value="Ribosomal protein L9, C-terminal domain"/>
    <property type="match status" value="1"/>
</dbReference>
<dbReference type="Gene3D" id="3.40.5.10">
    <property type="entry name" value="Ribosomal protein L9, N-terminal domain"/>
    <property type="match status" value="1"/>
</dbReference>
<dbReference type="HAMAP" id="MF_00503">
    <property type="entry name" value="Ribosomal_bL9"/>
    <property type="match status" value="1"/>
</dbReference>
<dbReference type="InterPro" id="IPR000244">
    <property type="entry name" value="Ribosomal_bL9"/>
</dbReference>
<dbReference type="InterPro" id="IPR009027">
    <property type="entry name" value="Ribosomal_bL9/RNase_H1_N"/>
</dbReference>
<dbReference type="InterPro" id="IPR020594">
    <property type="entry name" value="Ribosomal_bL9_bac/chp"/>
</dbReference>
<dbReference type="InterPro" id="IPR020069">
    <property type="entry name" value="Ribosomal_bL9_C"/>
</dbReference>
<dbReference type="InterPro" id="IPR036791">
    <property type="entry name" value="Ribosomal_bL9_C_sf"/>
</dbReference>
<dbReference type="InterPro" id="IPR020070">
    <property type="entry name" value="Ribosomal_bL9_N"/>
</dbReference>
<dbReference type="InterPro" id="IPR036935">
    <property type="entry name" value="Ribosomal_bL9_N_sf"/>
</dbReference>
<dbReference type="NCBIfam" id="TIGR00158">
    <property type="entry name" value="L9"/>
    <property type="match status" value="1"/>
</dbReference>
<dbReference type="PANTHER" id="PTHR21368">
    <property type="entry name" value="50S RIBOSOMAL PROTEIN L9"/>
    <property type="match status" value="1"/>
</dbReference>
<dbReference type="Pfam" id="PF03948">
    <property type="entry name" value="Ribosomal_L9_C"/>
    <property type="match status" value="1"/>
</dbReference>
<dbReference type="Pfam" id="PF01281">
    <property type="entry name" value="Ribosomal_L9_N"/>
    <property type="match status" value="1"/>
</dbReference>
<dbReference type="SUPFAM" id="SSF55658">
    <property type="entry name" value="L9 N-domain-like"/>
    <property type="match status" value="1"/>
</dbReference>
<dbReference type="SUPFAM" id="SSF55653">
    <property type="entry name" value="Ribosomal protein L9 C-domain"/>
    <property type="match status" value="1"/>
</dbReference>
<dbReference type="PROSITE" id="PS00651">
    <property type="entry name" value="RIBOSOMAL_L9"/>
    <property type="match status" value="1"/>
</dbReference>
<proteinExistence type="inferred from homology"/>
<reference key="1">
    <citation type="submission" date="2008-06" db="EMBL/GenBank/DDBJ databases">
        <title>Lactobacillus casei BL23 complete genome sequence.</title>
        <authorList>
            <person name="Maze A."/>
            <person name="Boel G."/>
            <person name="Bourand A."/>
            <person name="Loux V."/>
            <person name="Gibrat J.F."/>
            <person name="Zuniga M."/>
            <person name="Hartke A."/>
            <person name="Deutscher J."/>
        </authorList>
    </citation>
    <scope>NUCLEOTIDE SEQUENCE [LARGE SCALE GENOMIC DNA]</scope>
    <source>
        <strain>BL23</strain>
    </source>
</reference>
<keyword id="KW-0687">Ribonucleoprotein</keyword>
<keyword id="KW-0689">Ribosomal protein</keyword>
<keyword id="KW-0694">RNA-binding</keyword>
<keyword id="KW-0699">rRNA-binding</keyword>
<gene>
    <name evidence="1" type="primary">rplI</name>
    <name type="ordered locus">LCABL_01100</name>
</gene>
<organism>
    <name type="scientific">Lacticaseibacillus casei (strain BL23)</name>
    <name type="common">Lactobacillus casei</name>
    <dbReference type="NCBI Taxonomy" id="543734"/>
    <lineage>
        <taxon>Bacteria</taxon>
        <taxon>Bacillati</taxon>
        <taxon>Bacillota</taxon>
        <taxon>Bacilli</taxon>
        <taxon>Lactobacillales</taxon>
        <taxon>Lactobacillaceae</taxon>
        <taxon>Lacticaseibacillus</taxon>
    </lineage>
</organism>
<sequence length="151" mass="16962">MKVIFTQDVRGKGNRGQVKEVPDGYAENFLIRKGLAKAATPQAMSALRGQQRLEEKKEAEKKTEAEAMKAKIEDDKTVVQIQSKAGEDSRLFGSIPSKQIAQALDKQYQIKVDKRKIDLKQPIRSLGFTNVTVNLFPGIDARIRVHVIEQK</sequence>
<comment type="function">
    <text evidence="1">Binds to the 23S rRNA.</text>
</comment>
<comment type="similarity">
    <text evidence="1">Belongs to the bacterial ribosomal protein bL9 family.</text>
</comment>
<evidence type="ECO:0000255" key="1">
    <source>
        <dbReference type="HAMAP-Rule" id="MF_00503"/>
    </source>
</evidence>
<evidence type="ECO:0000305" key="2"/>